<dbReference type="EMBL" id="AK045254">
    <property type="protein sequence ID" value="BAC32282.1"/>
    <property type="status" value="ALT_FRAME"/>
    <property type="molecule type" value="mRNA"/>
</dbReference>
<dbReference type="EMBL" id="AK031623">
    <property type="protein sequence ID" value="BAC27485.1"/>
    <property type="molecule type" value="mRNA"/>
</dbReference>
<dbReference type="EMBL" id="AK043841">
    <property type="protein sequence ID" value="BAC31676.1"/>
    <property type="molecule type" value="mRNA"/>
</dbReference>
<dbReference type="EMBL" id="AL672060">
    <property type="status" value="NOT_ANNOTATED_CDS"/>
    <property type="molecule type" value="Genomic_DNA"/>
</dbReference>
<dbReference type="EMBL" id="BC115944">
    <property type="protein sequence ID" value="AAI15945.1"/>
    <property type="molecule type" value="mRNA"/>
</dbReference>
<dbReference type="CCDS" id="CCDS30007.1">
    <molecule id="Q8CD19-1"/>
</dbReference>
<dbReference type="RefSeq" id="NP_775590.2">
    <molecule id="Q8CD19-1"/>
    <property type="nucleotide sequence ID" value="NM_173414.3"/>
</dbReference>
<dbReference type="SMR" id="Q8CD19"/>
<dbReference type="FunCoup" id="Q8CD19">
    <property type="interactions" value="214"/>
</dbReference>
<dbReference type="STRING" id="10090.ENSMUSP00000064516"/>
<dbReference type="PhosphoSitePlus" id="Q8CD19"/>
<dbReference type="PaxDb" id="10090-ENSMUSP00000064516"/>
<dbReference type="ProteomicsDB" id="264914">
    <molecule id="Q8CD19-1"/>
</dbReference>
<dbReference type="ProteomicsDB" id="264915">
    <molecule id="Q8CD19-2"/>
</dbReference>
<dbReference type="Pumba" id="Q8CD19"/>
<dbReference type="Antibodypedia" id="585">
    <property type="antibodies" value="79 antibodies from 17 providers"/>
</dbReference>
<dbReference type="DNASU" id="236285"/>
<dbReference type="Ensembl" id="ENSMUST00000069763.3">
    <molecule id="Q8CD19-1"/>
    <property type="protein sequence ID" value="ENSMUSP00000064516.3"/>
    <property type="gene ID" value="ENSMUSG00000047344.10"/>
</dbReference>
<dbReference type="GeneID" id="236285"/>
<dbReference type="KEGG" id="mmu:236285"/>
<dbReference type="UCSC" id="uc009spo.1">
    <molecule id="Q8CD19-1"/>
    <property type="organism name" value="mouse"/>
</dbReference>
<dbReference type="AGR" id="MGI:2443335"/>
<dbReference type="CTD" id="347404"/>
<dbReference type="MGI" id="MGI:2443335">
    <property type="gene designation" value="Lancl3"/>
</dbReference>
<dbReference type="VEuPathDB" id="HostDB:ENSMUSG00000047344"/>
<dbReference type="eggNOG" id="KOG2787">
    <property type="taxonomic scope" value="Eukaryota"/>
</dbReference>
<dbReference type="GeneTree" id="ENSGT00530000063186"/>
<dbReference type="HOGENOM" id="CLU_036244_1_0_1"/>
<dbReference type="InParanoid" id="Q8CD19"/>
<dbReference type="OMA" id="YQEGCGE"/>
<dbReference type="OrthoDB" id="10257263at2759"/>
<dbReference type="PhylomeDB" id="Q8CD19"/>
<dbReference type="TreeFam" id="TF300068"/>
<dbReference type="BioGRID-ORCS" id="236285">
    <property type="hits" value="2 hits in 78 CRISPR screens"/>
</dbReference>
<dbReference type="PRO" id="PR:Q8CD19"/>
<dbReference type="Proteomes" id="UP000000589">
    <property type="component" value="Chromosome X"/>
</dbReference>
<dbReference type="RNAct" id="Q8CD19">
    <property type="molecule type" value="protein"/>
</dbReference>
<dbReference type="Bgee" id="ENSMUSG00000047344">
    <property type="expression patterns" value="Expressed in lumbar dorsal root ganglion and 94 other cell types or tissues"/>
</dbReference>
<dbReference type="GO" id="GO:0005975">
    <property type="term" value="P:carbohydrate metabolic process"/>
    <property type="evidence" value="ECO:0007669"/>
    <property type="project" value="InterPro"/>
</dbReference>
<dbReference type="GO" id="GO:0031179">
    <property type="term" value="P:peptide modification"/>
    <property type="evidence" value="ECO:0007669"/>
    <property type="project" value="InterPro"/>
</dbReference>
<dbReference type="CDD" id="cd04794">
    <property type="entry name" value="euk_LANCL"/>
    <property type="match status" value="1"/>
</dbReference>
<dbReference type="FunFam" id="1.50.10.10:FF:000012">
    <property type="entry name" value="LanC-like protein 3"/>
    <property type="match status" value="1"/>
</dbReference>
<dbReference type="Gene3D" id="1.50.10.10">
    <property type="match status" value="1"/>
</dbReference>
<dbReference type="InterPro" id="IPR012341">
    <property type="entry name" value="6hp_glycosidase-like_sf"/>
</dbReference>
<dbReference type="InterPro" id="IPR007822">
    <property type="entry name" value="LANC-like"/>
</dbReference>
<dbReference type="InterPro" id="IPR020464">
    <property type="entry name" value="LanC-like_prot_euk"/>
</dbReference>
<dbReference type="PANTHER" id="PTHR12736">
    <property type="entry name" value="LANC-LIKE PROTEIN"/>
    <property type="match status" value="1"/>
</dbReference>
<dbReference type="PANTHER" id="PTHR12736:SF7">
    <property type="entry name" value="LANC-LIKE PROTEIN 3"/>
    <property type="match status" value="1"/>
</dbReference>
<dbReference type="Pfam" id="PF05147">
    <property type="entry name" value="LANC_like"/>
    <property type="match status" value="1"/>
</dbReference>
<dbReference type="PRINTS" id="PR01951">
    <property type="entry name" value="LANCEUKARYTE"/>
</dbReference>
<dbReference type="PRINTS" id="PR01950">
    <property type="entry name" value="LANCSUPER"/>
</dbReference>
<dbReference type="SMART" id="SM01260">
    <property type="entry name" value="LANC_like"/>
    <property type="match status" value="1"/>
</dbReference>
<dbReference type="SUPFAM" id="SSF158745">
    <property type="entry name" value="LanC-like"/>
    <property type="match status" value="1"/>
</dbReference>
<sequence>MDTKRCFANRFDDYQGSLLAGQCEEAVAPLVTSTIERILQELPPLGGGAEARGATGAGSSCQGGLYSGVAGVAYMLYHVSQSPLFAAARERYLRFAKRLIDACLRAEEWGETDADTRAAFLLGGAGVYAVATLVYHALGRPDYVQPLGKFRALCAVCAPVSFLDCGSDELFVGRAGYLCAALVLKQKLAQEVLTPTQIKAICQAILDSGKQYALKKRKPFPLMYSYYGTEYLGAAHGLSSILQMLLSYQEHLKPSDRELVWQSVDFLMEQEQNCNWPPELGETIERENELVHWCHGAPGIAYLFAKAYLISKKPQYLDTCIRCGELTWQKGLLKKGPGICHGVAGSAYVFLLLYRLTGNSKYIYRAQRFAQFLFTEEFKSGSRVLESIYSLYEGFSGTVCFLIDLLQPNQAEFPLFSVFV</sequence>
<evidence type="ECO:0000303" key="1">
    <source>
    </source>
</evidence>
<evidence type="ECO:0000305" key="2"/>
<comment type="alternative products">
    <event type="alternative splicing"/>
    <isoform>
        <id>Q8CD19-1</id>
        <name>1</name>
        <sequence type="displayed"/>
    </isoform>
    <isoform>
        <id>Q8CD19-2</id>
        <name>2</name>
        <sequence type="described" ref="VSP_024856"/>
    </isoform>
</comment>
<comment type="similarity">
    <text evidence="2">Belongs to the LanC-like protein family.</text>
</comment>
<comment type="sequence caution" evidence="2">
    <conflict type="frameshift">
        <sequence resource="EMBL-CDS" id="BAC32282"/>
    </conflict>
</comment>
<gene>
    <name type="primary">Lancl3</name>
</gene>
<name>LANC3_MOUSE</name>
<keyword id="KW-0025">Alternative splicing</keyword>
<keyword id="KW-1185">Reference proteome</keyword>
<organism>
    <name type="scientific">Mus musculus</name>
    <name type="common">Mouse</name>
    <dbReference type="NCBI Taxonomy" id="10090"/>
    <lineage>
        <taxon>Eukaryota</taxon>
        <taxon>Metazoa</taxon>
        <taxon>Chordata</taxon>
        <taxon>Craniata</taxon>
        <taxon>Vertebrata</taxon>
        <taxon>Euteleostomi</taxon>
        <taxon>Mammalia</taxon>
        <taxon>Eutheria</taxon>
        <taxon>Euarchontoglires</taxon>
        <taxon>Glires</taxon>
        <taxon>Rodentia</taxon>
        <taxon>Myomorpha</taxon>
        <taxon>Muroidea</taxon>
        <taxon>Muridae</taxon>
        <taxon>Murinae</taxon>
        <taxon>Mus</taxon>
        <taxon>Mus</taxon>
    </lineage>
</organism>
<protein>
    <recommendedName>
        <fullName>LanC-like protein 3</fullName>
    </recommendedName>
</protein>
<reference key="1">
    <citation type="journal article" date="2005" name="Science">
        <title>The transcriptional landscape of the mammalian genome.</title>
        <authorList>
            <person name="Carninci P."/>
            <person name="Kasukawa T."/>
            <person name="Katayama S."/>
            <person name="Gough J."/>
            <person name="Frith M.C."/>
            <person name="Maeda N."/>
            <person name="Oyama R."/>
            <person name="Ravasi T."/>
            <person name="Lenhard B."/>
            <person name="Wells C."/>
            <person name="Kodzius R."/>
            <person name="Shimokawa K."/>
            <person name="Bajic V.B."/>
            <person name="Brenner S.E."/>
            <person name="Batalov S."/>
            <person name="Forrest A.R."/>
            <person name="Zavolan M."/>
            <person name="Davis M.J."/>
            <person name="Wilming L.G."/>
            <person name="Aidinis V."/>
            <person name="Allen J.E."/>
            <person name="Ambesi-Impiombato A."/>
            <person name="Apweiler R."/>
            <person name="Aturaliya R.N."/>
            <person name="Bailey T.L."/>
            <person name="Bansal M."/>
            <person name="Baxter L."/>
            <person name="Beisel K.W."/>
            <person name="Bersano T."/>
            <person name="Bono H."/>
            <person name="Chalk A.M."/>
            <person name="Chiu K.P."/>
            <person name="Choudhary V."/>
            <person name="Christoffels A."/>
            <person name="Clutterbuck D.R."/>
            <person name="Crowe M.L."/>
            <person name="Dalla E."/>
            <person name="Dalrymple B.P."/>
            <person name="de Bono B."/>
            <person name="Della Gatta G."/>
            <person name="di Bernardo D."/>
            <person name="Down T."/>
            <person name="Engstrom P."/>
            <person name="Fagiolini M."/>
            <person name="Faulkner G."/>
            <person name="Fletcher C.F."/>
            <person name="Fukushima T."/>
            <person name="Furuno M."/>
            <person name="Futaki S."/>
            <person name="Gariboldi M."/>
            <person name="Georgii-Hemming P."/>
            <person name="Gingeras T.R."/>
            <person name="Gojobori T."/>
            <person name="Green R.E."/>
            <person name="Gustincich S."/>
            <person name="Harbers M."/>
            <person name="Hayashi Y."/>
            <person name="Hensch T.K."/>
            <person name="Hirokawa N."/>
            <person name="Hill D."/>
            <person name="Huminiecki L."/>
            <person name="Iacono M."/>
            <person name="Ikeo K."/>
            <person name="Iwama A."/>
            <person name="Ishikawa T."/>
            <person name="Jakt M."/>
            <person name="Kanapin A."/>
            <person name="Katoh M."/>
            <person name="Kawasawa Y."/>
            <person name="Kelso J."/>
            <person name="Kitamura H."/>
            <person name="Kitano H."/>
            <person name="Kollias G."/>
            <person name="Krishnan S.P."/>
            <person name="Kruger A."/>
            <person name="Kummerfeld S.K."/>
            <person name="Kurochkin I.V."/>
            <person name="Lareau L.F."/>
            <person name="Lazarevic D."/>
            <person name="Lipovich L."/>
            <person name="Liu J."/>
            <person name="Liuni S."/>
            <person name="McWilliam S."/>
            <person name="Madan Babu M."/>
            <person name="Madera M."/>
            <person name="Marchionni L."/>
            <person name="Matsuda H."/>
            <person name="Matsuzawa S."/>
            <person name="Miki H."/>
            <person name="Mignone F."/>
            <person name="Miyake S."/>
            <person name="Morris K."/>
            <person name="Mottagui-Tabar S."/>
            <person name="Mulder N."/>
            <person name="Nakano N."/>
            <person name="Nakauchi H."/>
            <person name="Ng P."/>
            <person name="Nilsson R."/>
            <person name="Nishiguchi S."/>
            <person name="Nishikawa S."/>
            <person name="Nori F."/>
            <person name="Ohara O."/>
            <person name="Okazaki Y."/>
            <person name="Orlando V."/>
            <person name="Pang K.C."/>
            <person name="Pavan W.J."/>
            <person name="Pavesi G."/>
            <person name="Pesole G."/>
            <person name="Petrovsky N."/>
            <person name="Piazza S."/>
            <person name="Reed J."/>
            <person name="Reid J.F."/>
            <person name="Ring B.Z."/>
            <person name="Ringwald M."/>
            <person name="Rost B."/>
            <person name="Ruan Y."/>
            <person name="Salzberg S.L."/>
            <person name="Sandelin A."/>
            <person name="Schneider C."/>
            <person name="Schoenbach C."/>
            <person name="Sekiguchi K."/>
            <person name="Semple C.A."/>
            <person name="Seno S."/>
            <person name="Sessa L."/>
            <person name="Sheng Y."/>
            <person name="Shibata Y."/>
            <person name="Shimada H."/>
            <person name="Shimada K."/>
            <person name="Silva D."/>
            <person name="Sinclair B."/>
            <person name="Sperling S."/>
            <person name="Stupka E."/>
            <person name="Sugiura K."/>
            <person name="Sultana R."/>
            <person name="Takenaka Y."/>
            <person name="Taki K."/>
            <person name="Tammoja K."/>
            <person name="Tan S.L."/>
            <person name="Tang S."/>
            <person name="Taylor M.S."/>
            <person name="Tegner J."/>
            <person name="Teichmann S.A."/>
            <person name="Ueda H.R."/>
            <person name="van Nimwegen E."/>
            <person name="Verardo R."/>
            <person name="Wei C.L."/>
            <person name="Yagi K."/>
            <person name="Yamanishi H."/>
            <person name="Zabarovsky E."/>
            <person name="Zhu S."/>
            <person name="Zimmer A."/>
            <person name="Hide W."/>
            <person name="Bult C."/>
            <person name="Grimmond S.M."/>
            <person name="Teasdale R.D."/>
            <person name="Liu E.T."/>
            <person name="Brusic V."/>
            <person name="Quackenbush J."/>
            <person name="Wahlestedt C."/>
            <person name="Mattick J.S."/>
            <person name="Hume D.A."/>
            <person name="Kai C."/>
            <person name="Sasaki D."/>
            <person name="Tomaru Y."/>
            <person name="Fukuda S."/>
            <person name="Kanamori-Katayama M."/>
            <person name="Suzuki M."/>
            <person name="Aoki J."/>
            <person name="Arakawa T."/>
            <person name="Iida J."/>
            <person name="Imamura K."/>
            <person name="Itoh M."/>
            <person name="Kato T."/>
            <person name="Kawaji H."/>
            <person name="Kawagashira N."/>
            <person name="Kawashima T."/>
            <person name="Kojima M."/>
            <person name="Kondo S."/>
            <person name="Konno H."/>
            <person name="Nakano K."/>
            <person name="Ninomiya N."/>
            <person name="Nishio T."/>
            <person name="Okada M."/>
            <person name="Plessy C."/>
            <person name="Shibata K."/>
            <person name="Shiraki T."/>
            <person name="Suzuki S."/>
            <person name="Tagami M."/>
            <person name="Waki K."/>
            <person name="Watahiki A."/>
            <person name="Okamura-Oho Y."/>
            <person name="Suzuki H."/>
            <person name="Kawai J."/>
            <person name="Hayashizaki Y."/>
        </authorList>
    </citation>
    <scope>NUCLEOTIDE SEQUENCE [LARGE SCALE MRNA] (ISOFORM 1)</scope>
    <source>
        <strain>C57BL/6J</strain>
        <tissue>Brain cortex</tissue>
        <tissue>Embryo</tissue>
        <tissue>Testis</tissue>
    </source>
</reference>
<reference key="2">
    <citation type="journal article" date="2009" name="PLoS Biol.">
        <title>Lineage-specific biology revealed by a finished genome assembly of the mouse.</title>
        <authorList>
            <person name="Church D.M."/>
            <person name="Goodstadt L."/>
            <person name="Hillier L.W."/>
            <person name="Zody M.C."/>
            <person name="Goldstein S."/>
            <person name="She X."/>
            <person name="Bult C.J."/>
            <person name="Agarwala R."/>
            <person name="Cherry J.L."/>
            <person name="DiCuccio M."/>
            <person name="Hlavina W."/>
            <person name="Kapustin Y."/>
            <person name="Meric P."/>
            <person name="Maglott D."/>
            <person name="Birtle Z."/>
            <person name="Marques A.C."/>
            <person name="Graves T."/>
            <person name="Zhou S."/>
            <person name="Teague B."/>
            <person name="Potamousis K."/>
            <person name="Churas C."/>
            <person name="Place M."/>
            <person name="Herschleb J."/>
            <person name="Runnheim R."/>
            <person name="Forrest D."/>
            <person name="Amos-Landgraf J."/>
            <person name="Schwartz D.C."/>
            <person name="Cheng Z."/>
            <person name="Lindblad-Toh K."/>
            <person name="Eichler E.E."/>
            <person name="Ponting C.P."/>
        </authorList>
    </citation>
    <scope>NUCLEOTIDE SEQUENCE [LARGE SCALE GENOMIC DNA]</scope>
    <source>
        <strain>C57BL/6J</strain>
    </source>
</reference>
<reference key="3">
    <citation type="journal article" date="2004" name="Genome Res.">
        <title>The status, quality, and expansion of the NIH full-length cDNA project: the Mammalian Gene Collection (MGC).</title>
        <authorList>
            <consortium name="The MGC Project Team"/>
        </authorList>
    </citation>
    <scope>NUCLEOTIDE SEQUENCE [LARGE SCALE MRNA] (ISOFORM 2)</scope>
</reference>
<accession>Q8CD19</accession>
<accession>A2AFA5</accession>
<accession>Q14BF1</accession>
<accession>Q8BRA2</accession>
<accession>Q8BRN8</accession>
<feature type="chain" id="PRO_0000285252" description="LanC-like protein 3">
    <location>
        <begin position="1"/>
        <end position="420"/>
    </location>
</feature>
<feature type="splice variant" id="VSP_024856" description="In isoform 2." evidence="1">
    <location>
        <begin position="1"/>
        <end position="243"/>
    </location>
</feature>
<feature type="sequence conflict" description="In Ref. 1; BAC27485." evidence="2" ref="1">
    <original>W</original>
    <variation>R</variation>
    <location>
        <position position="261"/>
    </location>
</feature>
<proteinExistence type="evidence at transcript level"/>